<dbReference type="EC" id="5.1.3.9" evidence="1"/>
<dbReference type="EMBL" id="CP000255">
    <property type="protein sequence ID" value="ABD21297.1"/>
    <property type="molecule type" value="Genomic_DNA"/>
</dbReference>
<dbReference type="RefSeq" id="WP_000936720.1">
    <property type="nucleotide sequence ID" value="NZ_CP027476.1"/>
</dbReference>
<dbReference type="SMR" id="Q2FJU6"/>
<dbReference type="KEGG" id="saa:SAUSA300_0318"/>
<dbReference type="HOGENOM" id="CLU_086300_1_0_9"/>
<dbReference type="OMA" id="TRPMEIT"/>
<dbReference type="UniPathway" id="UPA00629">
    <property type="reaction ID" value="UER00682"/>
</dbReference>
<dbReference type="Proteomes" id="UP000001939">
    <property type="component" value="Chromosome"/>
</dbReference>
<dbReference type="GO" id="GO:0005829">
    <property type="term" value="C:cytosol"/>
    <property type="evidence" value="ECO:0007669"/>
    <property type="project" value="TreeGrafter"/>
</dbReference>
<dbReference type="GO" id="GO:0047465">
    <property type="term" value="F:N-acylglucosamine-6-phosphate 2-epimerase activity"/>
    <property type="evidence" value="ECO:0007669"/>
    <property type="project" value="UniProtKB-EC"/>
</dbReference>
<dbReference type="GO" id="GO:0005975">
    <property type="term" value="P:carbohydrate metabolic process"/>
    <property type="evidence" value="ECO:0007669"/>
    <property type="project" value="UniProtKB-UniRule"/>
</dbReference>
<dbReference type="GO" id="GO:0006053">
    <property type="term" value="P:N-acetylmannosamine catabolic process"/>
    <property type="evidence" value="ECO:0007669"/>
    <property type="project" value="TreeGrafter"/>
</dbReference>
<dbReference type="GO" id="GO:0019262">
    <property type="term" value="P:N-acetylneuraminate catabolic process"/>
    <property type="evidence" value="ECO:0007669"/>
    <property type="project" value="UniProtKB-UniRule"/>
</dbReference>
<dbReference type="CDD" id="cd04729">
    <property type="entry name" value="NanE"/>
    <property type="match status" value="1"/>
</dbReference>
<dbReference type="FunFam" id="3.20.20.70:FF:000035">
    <property type="entry name" value="Putative N-acetylmannosamine-6-phosphate 2-epimerase"/>
    <property type="match status" value="1"/>
</dbReference>
<dbReference type="Gene3D" id="3.20.20.70">
    <property type="entry name" value="Aldolase class I"/>
    <property type="match status" value="1"/>
</dbReference>
<dbReference type="HAMAP" id="MF_01235">
    <property type="entry name" value="ManNAc6P_epimer"/>
    <property type="match status" value="1"/>
</dbReference>
<dbReference type="InterPro" id="IPR013785">
    <property type="entry name" value="Aldolase_TIM"/>
</dbReference>
<dbReference type="InterPro" id="IPR007260">
    <property type="entry name" value="NanE"/>
</dbReference>
<dbReference type="InterPro" id="IPR011060">
    <property type="entry name" value="RibuloseP-bd_barrel"/>
</dbReference>
<dbReference type="NCBIfam" id="NF002231">
    <property type="entry name" value="PRK01130.1"/>
    <property type="match status" value="1"/>
</dbReference>
<dbReference type="PANTHER" id="PTHR36204">
    <property type="entry name" value="N-ACETYLMANNOSAMINE-6-PHOSPHATE 2-EPIMERASE-RELATED"/>
    <property type="match status" value="1"/>
</dbReference>
<dbReference type="PANTHER" id="PTHR36204:SF1">
    <property type="entry name" value="N-ACETYLMANNOSAMINE-6-PHOSPHATE 2-EPIMERASE-RELATED"/>
    <property type="match status" value="1"/>
</dbReference>
<dbReference type="Pfam" id="PF04131">
    <property type="entry name" value="NanE"/>
    <property type="match status" value="1"/>
</dbReference>
<dbReference type="SUPFAM" id="SSF51366">
    <property type="entry name" value="Ribulose-phoshate binding barrel"/>
    <property type="match status" value="1"/>
</dbReference>
<name>NANE_STAA3</name>
<gene>
    <name evidence="1" type="primary">nanE</name>
    <name type="ordered locus">SAUSA300_0318</name>
</gene>
<feature type="chain" id="PRO_0000301486" description="Putative N-acetylmannosamine-6-phosphate 2-epimerase">
    <location>
        <begin position="1"/>
        <end position="222"/>
    </location>
</feature>
<evidence type="ECO:0000255" key="1">
    <source>
        <dbReference type="HAMAP-Rule" id="MF_01235"/>
    </source>
</evidence>
<protein>
    <recommendedName>
        <fullName evidence="1">Putative N-acetylmannosamine-6-phosphate 2-epimerase</fullName>
        <ecNumber evidence="1">5.1.3.9</ecNumber>
    </recommendedName>
    <alternativeName>
        <fullName evidence="1">ManNAc-6-P epimerase</fullName>
    </alternativeName>
</protein>
<sequence>MLPHGLIVSCQALPDEPLHSSFIMSKMALAAYEGGAVGIRANTKEDILAIKETVDLPVIGIVKRDYDHSDVFITATSKEVDELIESQCEVIALDATLQQRPKETLDELVSYIRTHAPNVEIMADIATVEEAKNAARLGFDYIGTTLHGYTSYTQGQLLYQNDFQFLKDVLQSVDAKVIAEGNVITPDMYKRVMDLGVHCSVVGGAITRPKEITKRFVQIMED</sequence>
<accession>Q2FJU6</accession>
<comment type="function">
    <text evidence="1">Converts N-acetylmannosamine-6-phosphate (ManNAc-6-P) to N-acetylglucosamine-6-phosphate (GlcNAc-6-P).</text>
</comment>
<comment type="catalytic activity">
    <reaction evidence="1">
        <text>an N-acyl-D-glucosamine 6-phosphate = an N-acyl-D-mannosamine 6-phosphate</text>
        <dbReference type="Rhea" id="RHEA:23932"/>
        <dbReference type="ChEBI" id="CHEBI:57599"/>
        <dbReference type="ChEBI" id="CHEBI:57666"/>
        <dbReference type="EC" id="5.1.3.9"/>
    </reaction>
</comment>
<comment type="pathway">
    <text evidence="1">Amino-sugar metabolism; N-acetylneuraminate degradation; D-fructose 6-phosphate from N-acetylneuraminate: step 3/5.</text>
</comment>
<comment type="similarity">
    <text evidence="1">Belongs to the NanE family.</text>
</comment>
<reference key="1">
    <citation type="journal article" date="2006" name="Lancet">
        <title>Complete genome sequence of USA300, an epidemic clone of community-acquired meticillin-resistant Staphylococcus aureus.</title>
        <authorList>
            <person name="Diep B.A."/>
            <person name="Gill S.R."/>
            <person name="Chang R.F."/>
            <person name="Phan T.H."/>
            <person name="Chen J.H."/>
            <person name="Davidson M.G."/>
            <person name="Lin F."/>
            <person name="Lin J."/>
            <person name="Carleton H.A."/>
            <person name="Mongodin E.F."/>
            <person name="Sensabaugh G.F."/>
            <person name="Perdreau-Remington F."/>
        </authorList>
    </citation>
    <scope>NUCLEOTIDE SEQUENCE [LARGE SCALE GENOMIC DNA]</scope>
    <source>
        <strain>USA300</strain>
    </source>
</reference>
<proteinExistence type="inferred from homology"/>
<organism>
    <name type="scientific">Staphylococcus aureus (strain USA300)</name>
    <dbReference type="NCBI Taxonomy" id="367830"/>
    <lineage>
        <taxon>Bacteria</taxon>
        <taxon>Bacillati</taxon>
        <taxon>Bacillota</taxon>
        <taxon>Bacilli</taxon>
        <taxon>Bacillales</taxon>
        <taxon>Staphylococcaceae</taxon>
        <taxon>Staphylococcus</taxon>
    </lineage>
</organism>
<keyword id="KW-0119">Carbohydrate metabolism</keyword>
<keyword id="KW-0413">Isomerase</keyword>